<proteinExistence type="inferred from homology"/>
<protein>
    <recommendedName>
        <fullName evidence="1">UPF0145 protein cbdbA1711</fullName>
    </recommendedName>
</protein>
<evidence type="ECO:0000255" key="1">
    <source>
        <dbReference type="HAMAP-Rule" id="MF_00338"/>
    </source>
</evidence>
<organism>
    <name type="scientific">Dehalococcoides mccartyi (strain CBDB1)</name>
    <dbReference type="NCBI Taxonomy" id="255470"/>
    <lineage>
        <taxon>Bacteria</taxon>
        <taxon>Bacillati</taxon>
        <taxon>Chloroflexota</taxon>
        <taxon>Dehalococcoidia</taxon>
        <taxon>Dehalococcoidales</taxon>
        <taxon>Dehalococcoidaceae</taxon>
        <taxon>Dehalococcoides</taxon>
    </lineage>
</organism>
<dbReference type="EMBL" id="AJ965256">
    <property type="protein sequence ID" value="CAI83714.1"/>
    <property type="molecule type" value="Genomic_DNA"/>
</dbReference>
<dbReference type="RefSeq" id="WP_011310052.1">
    <property type="nucleotide sequence ID" value="NC_007356.1"/>
</dbReference>
<dbReference type="SMR" id="Q3ZW73"/>
<dbReference type="KEGG" id="deh:cbdbA1711"/>
<dbReference type="HOGENOM" id="CLU_117144_1_2_0"/>
<dbReference type="Proteomes" id="UP000000433">
    <property type="component" value="Chromosome"/>
</dbReference>
<dbReference type="Gene3D" id="3.30.110.70">
    <property type="entry name" value="Hypothetical protein apc22750. Chain B"/>
    <property type="match status" value="1"/>
</dbReference>
<dbReference type="HAMAP" id="MF_00338">
    <property type="entry name" value="UPF0145"/>
    <property type="match status" value="1"/>
</dbReference>
<dbReference type="InterPro" id="IPR035439">
    <property type="entry name" value="UPF0145_dom_sf"/>
</dbReference>
<dbReference type="InterPro" id="IPR002765">
    <property type="entry name" value="UPF0145_YbjQ-like"/>
</dbReference>
<dbReference type="PANTHER" id="PTHR34068:SF2">
    <property type="entry name" value="UPF0145 PROTEIN SCO3412"/>
    <property type="match status" value="1"/>
</dbReference>
<dbReference type="PANTHER" id="PTHR34068">
    <property type="entry name" value="UPF0145 PROTEIN YBJQ"/>
    <property type="match status" value="1"/>
</dbReference>
<dbReference type="Pfam" id="PF01906">
    <property type="entry name" value="YbjQ_1"/>
    <property type="match status" value="1"/>
</dbReference>
<dbReference type="SUPFAM" id="SSF117782">
    <property type="entry name" value="YbjQ-like"/>
    <property type="match status" value="1"/>
</dbReference>
<gene>
    <name type="ordered locus">cbdbA1711</name>
</gene>
<comment type="similarity">
    <text evidence="1">Belongs to the UPF0145 family.</text>
</comment>
<reference key="1">
    <citation type="journal article" date="2005" name="Nat. Biotechnol.">
        <title>Genome sequence of the chlorinated compound-respiring bacterium Dehalococcoides species strain CBDB1.</title>
        <authorList>
            <person name="Kube M."/>
            <person name="Beck A."/>
            <person name="Zinder S.H."/>
            <person name="Kuhl H."/>
            <person name="Reinhardt R."/>
            <person name="Adrian L."/>
        </authorList>
    </citation>
    <scope>NUCLEOTIDE SEQUENCE [LARGE SCALE GENOMIC DNA]</scope>
    <source>
        <strain>CBDB1</strain>
    </source>
</reference>
<feature type="chain" id="PRO_0000225824" description="UPF0145 protein cbdbA1711">
    <location>
        <begin position="1"/>
        <end position="104"/>
    </location>
</feature>
<accession>Q3ZW73</accession>
<sequence length="104" mass="11268">MIMTNTEAVAGHKIIKNLGLVKGNTIRAKHIGKDIMASLRSIVGGEIEEYTQMLDEARNEALKRMEADAKEKGANAIICVRFSTSAVMQNASEVMAYGTAVIVE</sequence>
<name>Y1711_DEHMC</name>